<proteinExistence type="inferred from homology"/>
<protein>
    <recommendedName>
        <fullName evidence="1">HTH-type transcriptional regulator ArgP</fullName>
    </recommendedName>
</protein>
<organism>
    <name type="scientific">Salmonella arizonae (strain ATCC BAA-731 / CDC346-86 / RSK2980)</name>
    <dbReference type="NCBI Taxonomy" id="41514"/>
    <lineage>
        <taxon>Bacteria</taxon>
        <taxon>Pseudomonadati</taxon>
        <taxon>Pseudomonadota</taxon>
        <taxon>Gammaproteobacteria</taxon>
        <taxon>Enterobacterales</taxon>
        <taxon>Enterobacteriaceae</taxon>
        <taxon>Salmonella</taxon>
    </lineage>
</organism>
<gene>
    <name evidence="1" type="primary">argP</name>
    <name type="synonym">iciA</name>
    <name type="ordered locus">SARI_04586</name>
</gene>
<dbReference type="EMBL" id="CP000880">
    <property type="protein sequence ID" value="ABX24359.1"/>
    <property type="molecule type" value="Genomic_DNA"/>
</dbReference>
<dbReference type="SMR" id="A9MRG1"/>
<dbReference type="STRING" id="41514.SARI_04586"/>
<dbReference type="KEGG" id="ses:SARI_04586"/>
<dbReference type="HOGENOM" id="CLU_063829_0_0_6"/>
<dbReference type="Proteomes" id="UP000002084">
    <property type="component" value="Chromosome"/>
</dbReference>
<dbReference type="GO" id="GO:0003677">
    <property type="term" value="F:DNA binding"/>
    <property type="evidence" value="ECO:0007669"/>
    <property type="project" value="UniProtKB-UniRule"/>
</dbReference>
<dbReference type="GO" id="GO:0003700">
    <property type="term" value="F:DNA-binding transcription factor activity"/>
    <property type="evidence" value="ECO:0007669"/>
    <property type="project" value="UniProtKB-UniRule"/>
</dbReference>
<dbReference type="CDD" id="cd08428">
    <property type="entry name" value="PBP2_IciA_ArgP"/>
    <property type="match status" value="1"/>
</dbReference>
<dbReference type="FunFam" id="1.10.10.10:FF:000061">
    <property type="entry name" value="HTH-type transcriptional regulator ArgP"/>
    <property type="match status" value="1"/>
</dbReference>
<dbReference type="FunFam" id="3.40.190.290:FF:000002">
    <property type="entry name" value="HTH-type transcriptional regulator ArgP"/>
    <property type="match status" value="1"/>
</dbReference>
<dbReference type="Gene3D" id="3.40.190.290">
    <property type="match status" value="1"/>
</dbReference>
<dbReference type="Gene3D" id="1.10.10.10">
    <property type="entry name" value="Winged helix-like DNA-binding domain superfamily/Winged helix DNA-binding domain"/>
    <property type="match status" value="1"/>
</dbReference>
<dbReference type="HAMAP" id="MF_00513">
    <property type="entry name" value="HTH_type_ArgP"/>
    <property type="match status" value="1"/>
</dbReference>
<dbReference type="InterPro" id="IPR017685">
    <property type="entry name" value="ArgP"/>
</dbReference>
<dbReference type="InterPro" id="IPR023490">
    <property type="entry name" value="ArgP_gammaproteobact"/>
</dbReference>
<dbReference type="InterPro" id="IPR050176">
    <property type="entry name" value="LTTR"/>
</dbReference>
<dbReference type="InterPro" id="IPR005119">
    <property type="entry name" value="LysR_subst-bd"/>
</dbReference>
<dbReference type="InterPro" id="IPR000847">
    <property type="entry name" value="Tscrpt_reg_HTH_LysR"/>
</dbReference>
<dbReference type="InterPro" id="IPR036388">
    <property type="entry name" value="WH-like_DNA-bd_sf"/>
</dbReference>
<dbReference type="InterPro" id="IPR036390">
    <property type="entry name" value="WH_DNA-bd_sf"/>
</dbReference>
<dbReference type="NCBIfam" id="TIGR03298">
    <property type="entry name" value="argP"/>
    <property type="match status" value="1"/>
</dbReference>
<dbReference type="NCBIfam" id="NF002964">
    <property type="entry name" value="PRK03635.1"/>
    <property type="match status" value="1"/>
</dbReference>
<dbReference type="NCBIfam" id="NF009888">
    <property type="entry name" value="PRK13348.1"/>
    <property type="match status" value="1"/>
</dbReference>
<dbReference type="PANTHER" id="PTHR30579:SF2">
    <property type="entry name" value="HTH-TYPE TRANSCRIPTIONAL REGULATOR ARGP"/>
    <property type="match status" value="1"/>
</dbReference>
<dbReference type="PANTHER" id="PTHR30579">
    <property type="entry name" value="TRANSCRIPTIONAL REGULATOR"/>
    <property type="match status" value="1"/>
</dbReference>
<dbReference type="Pfam" id="PF00126">
    <property type="entry name" value="HTH_1"/>
    <property type="match status" value="1"/>
</dbReference>
<dbReference type="Pfam" id="PF03466">
    <property type="entry name" value="LysR_substrate"/>
    <property type="match status" value="1"/>
</dbReference>
<dbReference type="PRINTS" id="PR00039">
    <property type="entry name" value="HTHLYSR"/>
</dbReference>
<dbReference type="SUPFAM" id="SSF53850">
    <property type="entry name" value="Periplasmic binding protein-like II"/>
    <property type="match status" value="1"/>
</dbReference>
<dbReference type="SUPFAM" id="SSF46785">
    <property type="entry name" value="Winged helix' DNA-binding domain"/>
    <property type="match status" value="1"/>
</dbReference>
<dbReference type="PROSITE" id="PS50931">
    <property type="entry name" value="HTH_LYSR"/>
    <property type="match status" value="1"/>
</dbReference>
<keyword id="KW-0238">DNA-binding</keyword>
<keyword id="KW-1185">Reference proteome</keyword>
<keyword id="KW-0804">Transcription</keyword>
<keyword id="KW-0805">Transcription regulation</keyword>
<name>ARGP_SALAR</name>
<comment type="function">
    <text evidence="1">Controls the transcription of genes involved in arginine and lysine metabolism.</text>
</comment>
<comment type="subunit">
    <text evidence="1">Homodimer.</text>
</comment>
<comment type="similarity">
    <text evidence="2">Belongs to the LysR transcriptional regulatory family.</text>
</comment>
<reference key="1">
    <citation type="submission" date="2007-11" db="EMBL/GenBank/DDBJ databases">
        <authorList>
            <consortium name="The Salmonella enterica serovar Arizonae Genome Sequencing Project"/>
            <person name="McClelland M."/>
            <person name="Sanderson E.K."/>
            <person name="Porwollik S."/>
            <person name="Spieth J."/>
            <person name="Clifton W.S."/>
            <person name="Fulton R."/>
            <person name="Chunyan W."/>
            <person name="Wollam A."/>
            <person name="Shah N."/>
            <person name="Pepin K."/>
            <person name="Bhonagiri V."/>
            <person name="Nash W."/>
            <person name="Johnson M."/>
            <person name="Thiruvilangam P."/>
            <person name="Wilson R."/>
        </authorList>
    </citation>
    <scope>NUCLEOTIDE SEQUENCE [LARGE SCALE GENOMIC DNA]</scope>
    <source>
        <strain>ATCC BAA-731 / CDC346-86 / RSK2980</strain>
    </source>
</reference>
<accession>A9MRG1</accession>
<feature type="chain" id="PRO_1000081591" description="HTH-type transcriptional regulator ArgP">
    <location>
        <begin position="1"/>
        <end position="297"/>
    </location>
</feature>
<feature type="domain" description="HTH lysR-type" evidence="1">
    <location>
        <begin position="4"/>
        <end position="60"/>
    </location>
</feature>
<feature type="DNA-binding region" description="H-T-H motif" evidence="1">
    <location>
        <begin position="21"/>
        <end position="40"/>
    </location>
</feature>
<evidence type="ECO:0000255" key="1">
    <source>
        <dbReference type="HAMAP-Rule" id="MF_00513"/>
    </source>
</evidence>
<evidence type="ECO:0000305" key="2"/>
<sequence length="297" mass="33509">MKRPDYRTLQALDAVIRERGFERAAQKLCITQSAVSQRIKQLENMFGQPLLVRTVPPRPTEQGQKLLALLRQVELLEEEWLGDEQTGSTPLLLSLAVNADSLATWLLPALAPVLADSPIRLNLQVEDETRTQERLRRGEVVGAVSIQHQALPSCLVDKLGALDYLFVASKPFAERYFPNGVTRSSLLKAPAVAFDHLDDMHQAFLQQNFDLPPGSVPCHIVNSSEAFVQLARQGTTCCMIPHLQIEQELESGELINLTPGLLQRRMLYWHRFAPESRMMRKVTDALLEYGHKVLRQD</sequence>